<reference key="1">
    <citation type="journal article" date="2009" name="J. Bacteriol.">
        <title>The complete genome sequence of Helicobacter pylori strain G27.</title>
        <authorList>
            <person name="Baltrus D.A."/>
            <person name="Amieva M.R."/>
            <person name="Covacci A."/>
            <person name="Lowe T.M."/>
            <person name="Merrell D.S."/>
            <person name="Ottemann K.M."/>
            <person name="Stein M."/>
            <person name="Salama N.R."/>
            <person name="Guillemin K."/>
        </authorList>
    </citation>
    <scope>NUCLEOTIDE SEQUENCE [LARGE SCALE GENOMIC DNA]</scope>
    <source>
        <strain>G27</strain>
    </source>
</reference>
<sequence length="263" mass="29090">MKLKSFGVFGNPIKHSKSPLIHNACFLTFQKELGFLGHYHPILLPLESRIKNEFLHLGLSGANVTLPFKERAFQICDKIKGIALECGAVNTLVLEDDELVGYNTDALGFWLSLGGEDYQSALILGSGGSAKALACELKKQGLKVSVLNRSSRGLDFFQRLGCDCFMDPPKSAFDLIINATSASLNHELPLNKEVLKGYFKEGQLAYDLAYGFLTPFLSLAKELETPFQDGKGMLIYQASLSFEKFSASQIPYPKVFEVMRSVF</sequence>
<name>AROE_HELPG</name>
<proteinExistence type="inferred from homology"/>
<protein>
    <recommendedName>
        <fullName evidence="1">Shikimate dehydrogenase (NADP(+))</fullName>
        <shortName evidence="1">SDH</shortName>
        <ecNumber evidence="1">1.1.1.25</ecNumber>
    </recommendedName>
</protein>
<keyword id="KW-0028">Amino-acid biosynthesis</keyword>
<keyword id="KW-0057">Aromatic amino acid biosynthesis</keyword>
<keyword id="KW-0521">NADP</keyword>
<keyword id="KW-0560">Oxidoreductase</keyword>
<keyword id="KW-1185">Reference proteome</keyword>
<feature type="chain" id="PRO_1000204267" description="Shikimate dehydrogenase (NADP(+))">
    <location>
        <begin position="1"/>
        <end position="263"/>
    </location>
</feature>
<feature type="active site" description="Proton acceptor" evidence="1">
    <location>
        <position position="69"/>
    </location>
</feature>
<feature type="binding site" evidence="1">
    <location>
        <begin position="16"/>
        <end position="18"/>
    </location>
    <ligand>
        <name>shikimate</name>
        <dbReference type="ChEBI" id="CHEBI:36208"/>
    </ligand>
</feature>
<feature type="binding site" evidence="1">
    <location>
        <position position="65"/>
    </location>
    <ligand>
        <name>shikimate</name>
        <dbReference type="ChEBI" id="CHEBI:36208"/>
    </ligand>
</feature>
<feature type="binding site" evidence="1">
    <location>
        <position position="90"/>
    </location>
    <ligand>
        <name>shikimate</name>
        <dbReference type="ChEBI" id="CHEBI:36208"/>
    </ligand>
</feature>
<feature type="binding site" evidence="1">
    <location>
        <position position="105"/>
    </location>
    <ligand>
        <name>shikimate</name>
        <dbReference type="ChEBI" id="CHEBI:36208"/>
    </ligand>
</feature>
<feature type="binding site" evidence="1">
    <location>
        <begin position="125"/>
        <end position="129"/>
    </location>
    <ligand>
        <name>NADP(+)</name>
        <dbReference type="ChEBI" id="CHEBI:58349"/>
    </ligand>
</feature>
<feature type="binding site" evidence="1">
    <location>
        <position position="208"/>
    </location>
    <ligand>
        <name>NADP(+)</name>
        <dbReference type="ChEBI" id="CHEBI:58349"/>
    </ligand>
</feature>
<feature type="binding site" evidence="1">
    <location>
        <position position="210"/>
    </location>
    <ligand>
        <name>shikimate</name>
        <dbReference type="ChEBI" id="CHEBI:36208"/>
    </ligand>
</feature>
<feature type="binding site" evidence="1">
    <location>
        <position position="230"/>
    </location>
    <ligand>
        <name>NADP(+)</name>
        <dbReference type="ChEBI" id="CHEBI:58349"/>
    </ligand>
</feature>
<gene>
    <name evidence="1" type="primary">aroE</name>
    <name type="ordered locus">HPG27_1194</name>
</gene>
<comment type="function">
    <text evidence="1">Involved in the biosynthesis of the chorismate, which leads to the biosynthesis of aromatic amino acids. Catalyzes the reversible NADPH linked reduction of 3-dehydroshikimate (DHSA) to yield shikimate (SA).</text>
</comment>
<comment type="catalytic activity">
    <reaction evidence="1">
        <text>shikimate + NADP(+) = 3-dehydroshikimate + NADPH + H(+)</text>
        <dbReference type="Rhea" id="RHEA:17737"/>
        <dbReference type="ChEBI" id="CHEBI:15378"/>
        <dbReference type="ChEBI" id="CHEBI:16630"/>
        <dbReference type="ChEBI" id="CHEBI:36208"/>
        <dbReference type="ChEBI" id="CHEBI:57783"/>
        <dbReference type="ChEBI" id="CHEBI:58349"/>
        <dbReference type="EC" id="1.1.1.25"/>
    </reaction>
</comment>
<comment type="pathway">
    <text evidence="1">Metabolic intermediate biosynthesis; chorismate biosynthesis; chorismate from D-erythrose 4-phosphate and phosphoenolpyruvate: step 4/7.</text>
</comment>
<comment type="subunit">
    <text evidence="1">Homodimer.</text>
</comment>
<comment type="similarity">
    <text evidence="1">Belongs to the shikimate dehydrogenase family.</text>
</comment>
<organism>
    <name type="scientific">Helicobacter pylori (strain G27)</name>
    <dbReference type="NCBI Taxonomy" id="563041"/>
    <lineage>
        <taxon>Bacteria</taxon>
        <taxon>Pseudomonadati</taxon>
        <taxon>Campylobacterota</taxon>
        <taxon>Epsilonproteobacteria</taxon>
        <taxon>Campylobacterales</taxon>
        <taxon>Helicobacteraceae</taxon>
        <taxon>Helicobacter</taxon>
    </lineage>
</organism>
<dbReference type="EC" id="1.1.1.25" evidence="1"/>
<dbReference type="EMBL" id="CP001173">
    <property type="protein sequence ID" value="ACI27944.1"/>
    <property type="molecule type" value="Genomic_DNA"/>
</dbReference>
<dbReference type="RefSeq" id="WP_000769599.1">
    <property type="nucleotide sequence ID" value="NC_011333.1"/>
</dbReference>
<dbReference type="SMR" id="B5Z8P5"/>
<dbReference type="KEGG" id="hpg:HPG27_1194"/>
<dbReference type="HOGENOM" id="CLU_044063_2_0_7"/>
<dbReference type="UniPathway" id="UPA00053">
    <property type="reaction ID" value="UER00087"/>
</dbReference>
<dbReference type="Proteomes" id="UP000001735">
    <property type="component" value="Chromosome"/>
</dbReference>
<dbReference type="GO" id="GO:0005829">
    <property type="term" value="C:cytosol"/>
    <property type="evidence" value="ECO:0007669"/>
    <property type="project" value="TreeGrafter"/>
</dbReference>
<dbReference type="GO" id="GO:0050661">
    <property type="term" value="F:NADP binding"/>
    <property type="evidence" value="ECO:0007669"/>
    <property type="project" value="InterPro"/>
</dbReference>
<dbReference type="GO" id="GO:0004764">
    <property type="term" value="F:shikimate 3-dehydrogenase (NADP+) activity"/>
    <property type="evidence" value="ECO:0007669"/>
    <property type="project" value="UniProtKB-UniRule"/>
</dbReference>
<dbReference type="GO" id="GO:0008652">
    <property type="term" value="P:amino acid biosynthetic process"/>
    <property type="evidence" value="ECO:0007669"/>
    <property type="project" value="UniProtKB-KW"/>
</dbReference>
<dbReference type="GO" id="GO:0009073">
    <property type="term" value="P:aromatic amino acid family biosynthetic process"/>
    <property type="evidence" value="ECO:0007669"/>
    <property type="project" value="UniProtKB-KW"/>
</dbReference>
<dbReference type="GO" id="GO:0009423">
    <property type="term" value="P:chorismate biosynthetic process"/>
    <property type="evidence" value="ECO:0007669"/>
    <property type="project" value="UniProtKB-UniRule"/>
</dbReference>
<dbReference type="GO" id="GO:0019632">
    <property type="term" value="P:shikimate metabolic process"/>
    <property type="evidence" value="ECO:0007669"/>
    <property type="project" value="InterPro"/>
</dbReference>
<dbReference type="CDD" id="cd01065">
    <property type="entry name" value="NAD_bind_Shikimate_DH"/>
    <property type="match status" value="1"/>
</dbReference>
<dbReference type="FunFam" id="3.40.50.10860:FF:000025">
    <property type="entry name" value="Shikimate dehydrogenase (NADP(+))"/>
    <property type="match status" value="1"/>
</dbReference>
<dbReference type="Gene3D" id="3.40.50.10860">
    <property type="entry name" value="Leucine Dehydrogenase, chain A, domain 1"/>
    <property type="match status" value="1"/>
</dbReference>
<dbReference type="Gene3D" id="3.40.50.720">
    <property type="entry name" value="NAD(P)-binding Rossmann-like Domain"/>
    <property type="match status" value="1"/>
</dbReference>
<dbReference type="HAMAP" id="MF_00222">
    <property type="entry name" value="Shikimate_DH_AroE"/>
    <property type="match status" value="1"/>
</dbReference>
<dbReference type="InterPro" id="IPR046346">
    <property type="entry name" value="Aminoacid_DH-like_N_sf"/>
</dbReference>
<dbReference type="InterPro" id="IPR036291">
    <property type="entry name" value="NAD(P)-bd_dom_sf"/>
</dbReference>
<dbReference type="InterPro" id="IPR011342">
    <property type="entry name" value="Shikimate_DH"/>
</dbReference>
<dbReference type="InterPro" id="IPR013708">
    <property type="entry name" value="Shikimate_DH-bd_N"/>
</dbReference>
<dbReference type="InterPro" id="IPR022893">
    <property type="entry name" value="Shikimate_DH_fam"/>
</dbReference>
<dbReference type="NCBIfam" id="TIGR00507">
    <property type="entry name" value="aroE"/>
    <property type="match status" value="1"/>
</dbReference>
<dbReference type="NCBIfam" id="NF001316">
    <property type="entry name" value="PRK00258.2-5"/>
    <property type="match status" value="1"/>
</dbReference>
<dbReference type="PANTHER" id="PTHR21089:SF1">
    <property type="entry name" value="BIFUNCTIONAL 3-DEHYDROQUINATE DEHYDRATASE_SHIKIMATE DEHYDROGENASE, CHLOROPLASTIC"/>
    <property type="match status" value="1"/>
</dbReference>
<dbReference type="PANTHER" id="PTHR21089">
    <property type="entry name" value="SHIKIMATE DEHYDROGENASE"/>
    <property type="match status" value="1"/>
</dbReference>
<dbReference type="Pfam" id="PF08501">
    <property type="entry name" value="Shikimate_dh_N"/>
    <property type="match status" value="1"/>
</dbReference>
<dbReference type="SUPFAM" id="SSF53223">
    <property type="entry name" value="Aminoacid dehydrogenase-like, N-terminal domain"/>
    <property type="match status" value="1"/>
</dbReference>
<dbReference type="SUPFAM" id="SSF51735">
    <property type="entry name" value="NAD(P)-binding Rossmann-fold domains"/>
    <property type="match status" value="1"/>
</dbReference>
<evidence type="ECO:0000255" key="1">
    <source>
        <dbReference type="HAMAP-Rule" id="MF_00222"/>
    </source>
</evidence>
<accession>B5Z8P5</accession>